<keyword id="KW-0963">Cytoplasm</keyword>
<keyword id="KW-0507">mRNA processing</keyword>
<keyword id="KW-0508">mRNA splicing</keyword>
<keyword id="KW-0539">Nucleus</keyword>
<keyword id="KW-1185">Reference proteome</keyword>
<keyword id="KW-0687">Ribonucleoprotein</keyword>
<keyword id="KW-0694">RNA-binding</keyword>
<keyword id="KW-0747">Spliceosome</keyword>
<reference key="1">
    <citation type="submission" date="2006-04" db="EMBL/GenBank/DDBJ databases">
        <authorList>
            <consortium name="NIH - Mammalian Gene Collection (MGC) project"/>
        </authorList>
    </citation>
    <scope>NUCLEOTIDE SEQUENCE [LARGE SCALE MRNA]</scope>
    <source>
        <strain>Hereford</strain>
        <tissue>Fetal cerebellum</tissue>
    </source>
</reference>
<gene>
    <name type="primary">SNRPE</name>
</gene>
<accession>A4FUI2</accession>
<organism>
    <name type="scientific">Bos taurus</name>
    <name type="common">Bovine</name>
    <dbReference type="NCBI Taxonomy" id="9913"/>
    <lineage>
        <taxon>Eukaryota</taxon>
        <taxon>Metazoa</taxon>
        <taxon>Chordata</taxon>
        <taxon>Craniata</taxon>
        <taxon>Vertebrata</taxon>
        <taxon>Euteleostomi</taxon>
        <taxon>Mammalia</taxon>
        <taxon>Eutheria</taxon>
        <taxon>Laurasiatheria</taxon>
        <taxon>Artiodactyla</taxon>
        <taxon>Ruminantia</taxon>
        <taxon>Pecora</taxon>
        <taxon>Bovidae</taxon>
        <taxon>Bovinae</taxon>
        <taxon>Bos</taxon>
    </lineage>
</organism>
<evidence type="ECO:0000250" key="1">
    <source>
        <dbReference type="UniProtKB" id="P62304"/>
    </source>
</evidence>
<evidence type="ECO:0000255" key="2">
    <source>
        <dbReference type="PROSITE-ProRule" id="PRU01346"/>
    </source>
</evidence>
<evidence type="ECO:0000305" key="3"/>
<comment type="function">
    <text evidence="1">Plays a role in pre-mRNA splicing as a core component of the spliceosomal U1, U2, U4 and U5 small nuclear ribonucleoproteins (snRNPs), the building blocks of the spliceosome. Component of both the pre-catalytic spliceosome B complex and activated spliceosome C complexes. As a component of the minor spliceosome, involved in the splicing of U12-type introns in pre-mRNAs. As part of the U7 snRNP it is involved in histone 3'-end processing.</text>
</comment>
<comment type="subunit">
    <text evidence="1">Core component of the spliceosomal U1, U2, U4 and U5 small nuclear ribonucleoproteins (snRNPs), the building blocks of the spliceosome. Most spliceosomal snRNPs contain a common set of Sm proteins, SNRPB, SNRPD1, SNRPD2, SNRPD3, SNRPE, SNRPF and SNRPG that assemble in a heptameric protein ring on the Sm site of the small nuclear RNA to form the core snRNP. Component of the U1 snRNP. The U1 snRNP is composed of the U1 snRNA and the 7 core Sm proteins SNRPB, SNRPD1, SNRPD2, SNRPD3, SNRPE, SNRPF and SNRPG, and at least three U1 snRNP-specific proteins SNRNP70/U1-70K, SNRPA/U1-A and SNRPC/U1-C. Component of the U4/U6-U5 tri-snRNP complex composed of the U4, U6 and U5 snRNAs and at least PRPF3, PRPF4, PRPF6, PRPF8, PRPF31, SNRNP200, TXNL4A, SNRNP40, SNRPB, SNRPD1, SNRPD2, SNRPD3, SNRPE, SNRPF, SNRPG, DDX23, CD2BP2, PPIH, SNU13, EFTUD2, SART1 and USP39, plus LSM2, LSM3, LSM4, LSM5, LSM6, LSM7 and LSM8. Component of the U7 snRNP complex, or U7 Sm protein core complex, that is composed of the U7 snRNA and at least LSM10, LSM11, SNRPB, SNRPD3, SNRPE, SNRPF and SNRPG; the complex does not contain SNRPD1 and SNRPD2. Component of the minor spliceosome, which splices U12-type introns. Part of the SMN-Sm complex that contains SMN1, GEMIN2/SIP1, DDX20/GEMIN3, GEMIN4, GEMIN5, GEMIN6, GEMIN7, GEMIN8, STRAP/UNRIP and the Sm proteins SNRPB, SNRPD1, SNRPD2, SNRPD3, SNRPE, SNRPF and SNRPG; catalyzes core snRNPs assembly. Forms a 6S pICln-Sm complex composed of CLNS1A/pICln, SNRPD1, SNRPD2, SNRPE, SNRPF and SNRPG; ring-like structure where CLNS1A/pICln mimics additional Sm proteins and which is unable to assemble into the core snRNP. Interacts with SMN1; the interaction is direct. Interacts with GEMIN2 (via N-terminus); the interaction is direct. Interacts with SNRPF; the interaction is direct. Interacts with SNRPG; the interaction is direct.</text>
</comment>
<comment type="subcellular location">
    <subcellularLocation>
        <location evidence="1">Cytoplasm</location>
        <location evidence="1">Cytosol</location>
    </subcellularLocation>
    <subcellularLocation>
        <location evidence="1">Nucleus</location>
    </subcellularLocation>
    <text evidence="1">SMN-mediated assembly into core snRNPs occurs in the cytosol before SMN-mediated transport to the nucleus to be included in spliceosomes.</text>
</comment>
<comment type="similarity">
    <text evidence="3">Belongs to the snRNP Sm proteins family.</text>
</comment>
<dbReference type="EMBL" id="BC114915">
    <property type="protein sequence ID" value="AAI14916.1"/>
    <property type="molecule type" value="mRNA"/>
</dbReference>
<dbReference type="RefSeq" id="NP_001076928.1">
    <property type="nucleotide sequence ID" value="NM_001083459.2"/>
</dbReference>
<dbReference type="SMR" id="A4FUI2"/>
<dbReference type="FunCoup" id="A4FUI2">
    <property type="interactions" value="2729"/>
</dbReference>
<dbReference type="STRING" id="9913.ENSBTAP00000022848"/>
<dbReference type="PaxDb" id="9913-ENSBTAP00000050704"/>
<dbReference type="PeptideAtlas" id="A4FUI2"/>
<dbReference type="Ensembl" id="ENSBTAT00000072928.2">
    <property type="protein sequence ID" value="ENSBTAP00000059185.2"/>
    <property type="gene ID" value="ENSBTAG00000050130.2"/>
</dbReference>
<dbReference type="GeneID" id="531493"/>
<dbReference type="KEGG" id="bta:531493"/>
<dbReference type="CTD" id="6635"/>
<dbReference type="eggNOG" id="KOG1774">
    <property type="taxonomic scope" value="Eukaryota"/>
</dbReference>
<dbReference type="GeneTree" id="ENSGT00390000012818"/>
<dbReference type="InParanoid" id="A4FUI2"/>
<dbReference type="OrthoDB" id="25620at2759"/>
<dbReference type="CD-CODE" id="D7FE2080">
    <property type="entry name" value="Nucleolus"/>
</dbReference>
<dbReference type="Proteomes" id="UP000009136">
    <property type="component" value="Chromosome 16"/>
</dbReference>
<dbReference type="GO" id="GO:0005829">
    <property type="term" value="C:cytosol"/>
    <property type="evidence" value="ECO:0000250"/>
    <property type="project" value="UniProtKB"/>
</dbReference>
<dbReference type="GO" id="GO:0034709">
    <property type="term" value="C:methylosome"/>
    <property type="evidence" value="ECO:0000250"/>
    <property type="project" value="UniProtKB"/>
</dbReference>
<dbReference type="GO" id="GO:0005634">
    <property type="term" value="C:nucleus"/>
    <property type="evidence" value="ECO:0000250"/>
    <property type="project" value="UniProtKB"/>
</dbReference>
<dbReference type="GO" id="GO:0034715">
    <property type="term" value="C:pICln-Sm protein complex"/>
    <property type="evidence" value="ECO:0000250"/>
    <property type="project" value="UniProtKB"/>
</dbReference>
<dbReference type="GO" id="GO:0071011">
    <property type="term" value="C:precatalytic spliceosome"/>
    <property type="evidence" value="ECO:0000318"/>
    <property type="project" value="GO_Central"/>
</dbReference>
<dbReference type="GO" id="GO:0034719">
    <property type="term" value="C:SMN-Sm protein complex"/>
    <property type="evidence" value="ECO:0000250"/>
    <property type="project" value="UniProtKB"/>
</dbReference>
<dbReference type="GO" id="GO:0005685">
    <property type="term" value="C:U1 snRNP"/>
    <property type="evidence" value="ECO:0000250"/>
    <property type="project" value="UniProtKB"/>
</dbReference>
<dbReference type="GO" id="GO:0005686">
    <property type="term" value="C:U2 snRNP"/>
    <property type="evidence" value="ECO:0000318"/>
    <property type="project" value="GO_Central"/>
</dbReference>
<dbReference type="GO" id="GO:0071007">
    <property type="term" value="C:U2-type catalytic step 2 spliceosome"/>
    <property type="evidence" value="ECO:0000250"/>
    <property type="project" value="UniProtKB"/>
</dbReference>
<dbReference type="GO" id="GO:0071005">
    <property type="term" value="C:U2-type precatalytic spliceosome"/>
    <property type="evidence" value="ECO:0000250"/>
    <property type="project" value="UniProtKB"/>
</dbReference>
<dbReference type="GO" id="GO:0005684">
    <property type="term" value="C:U2-type spliceosomal complex"/>
    <property type="evidence" value="ECO:0000250"/>
    <property type="project" value="UniProtKB"/>
</dbReference>
<dbReference type="GO" id="GO:0005687">
    <property type="term" value="C:U4 snRNP"/>
    <property type="evidence" value="ECO:0000250"/>
    <property type="project" value="UniProtKB"/>
</dbReference>
<dbReference type="GO" id="GO:0046540">
    <property type="term" value="C:U4/U6 x U5 tri-snRNP complex"/>
    <property type="evidence" value="ECO:0000250"/>
    <property type="project" value="UniProtKB"/>
</dbReference>
<dbReference type="GO" id="GO:0005682">
    <property type="term" value="C:U5 snRNP"/>
    <property type="evidence" value="ECO:0000318"/>
    <property type="project" value="GO_Central"/>
</dbReference>
<dbReference type="GO" id="GO:0005683">
    <property type="term" value="C:U7 snRNP"/>
    <property type="evidence" value="ECO:0000250"/>
    <property type="project" value="UniProtKB"/>
</dbReference>
<dbReference type="GO" id="GO:0003723">
    <property type="term" value="F:RNA binding"/>
    <property type="evidence" value="ECO:0007669"/>
    <property type="project" value="UniProtKB-KW"/>
</dbReference>
<dbReference type="GO" id="GO:0000398">
    <property type="term" value="P:mRNA splicing, via spliceosome"/>
    <property type="evidence" value="ECO:0000250"/>
    <property type="project" value="UniProtKB"/>
</dbReference>
<dbReference type="GO" id="GO:0000387">
    <property type="term" value="P:spliceosomal snRNP assembly"/>
    <property type="evidence" value="ECO:0000250"/>
    <property type="project" value="UniProtKB"/>
</dbReference>
<dbReference type="CDD" id="cd01718">
    <property type="entry name" value="Sm_E"/>
    <property type="match status" value="1"/>
</dbReference>
<dbReference type="FunFam" id="2.30.30.100:FF:000059">
    <property type="entry name" value="Small nuclear ribonucleoprotein E"/>
    <property type="match status" value="1"/>
</dbReference>
<dbReference type="Gene3D" id="2.30.30.100">
    <property type="match status" value="1"/>
</dbReference>
<dbReference type="InterPro" id="IPR010920">
    <property type="entry name" value="LSM_dom_sf"/>
</dbReference>
<dbReference type="InterPro" id="IPR047575">
    <property type="entry name" value="Sm"/>
</dbReference>
<dbReference type="InterPro" id="IPR001163">
    <property type="entry name" value="Sm_dom_euk/arc"/>
</dbReference>
<dbReference type="InterPro" id="IPR027078">
    <property type="entry name" value="snRNP-E"/>
</dbReference>
<dbReference type="PANTHER" id="PTHR11193">
    <property type="entry name" value="SMALL NUCLEAR RIBONUCLEOPROTEIN E"/>
    <property type="match status" value="1"/>
</dbReference>
<dbReference type="Pfam" id="PF01423">
    <property type="entry name" value="LSM"/>
    <property type="match status" value="1"/>
</dbReference>
<dbReference type="SMART" id="SM00651">
    <property type="entry name" value="Sm"/>
    <property type="match status" value="1"/>
</dbReference>
<dbReference type="SUPFAM" id="SSF50182">
    <property type="entry name" value="Sm-like ribonucleoproteins"/>
    <property type="match status" value="1"/>
</dbReference>
<dbReference type="PROSITE" id="PS52002">
    <property type="entry name" value="SM"/>
    <property type="match status" value="1"/>
</dbReference>
<name>RUXE_BOVIN</name>
<protein>
    <recommendedName>
        <fullName>Small nuclear ribonucleoprotein E</fullName>
        <shortName>snRNP-E</shortName>
    </recommendedName>
    <alternativeName>
        <fullName>Sm protein E</fullName>
        <shortName>Sm-E</shortName>
        <shortName>SmE</shortName>
    </alternativeName>
</protein>
<proteinExistence type="inferred from homology"/>
<feature type="chain" id="PRO_0000340651" description="Small nuclear ribonucleoprotein E">
    <location>
        <begin position="1"/>
        <end position="92"/>
    </location>
</feature>
<feature type="domain" description="Sm" evidence="2">
    <location>
        <begin position="18"/>
        <end position="92"/>
    </location>
</feature>
<sequence>MAYRGQGQKVQKVMVQPINLIFRYLQNRSRIQVWLYEQVNMRIEGCIIGFDEYMNLVLDDAEEIHSKTKSRKQLGRIMLKGDNITLLQSVSN</sequence>